<sequence>MPLNREDKQAVVAEVAAQVAKAQTVVLAEYRGIAVGDLTTLRAKAREQKVYLRVLKNTLARRAVEGTPFAPLAEQMTGPLIYGISEDAIAAAKVVNDFSKSNDKLVIKAGSYDGKVMDKAGVQALASIPSREELLSKLLFVMQAPVSGFARALAALAEKKQAEAA</sequence>
<reference key="1">
    <citation type="journal article" date="2005" name="BMC Genomics">
        <title>Bacterial genome adaptation to niches: divergence of the potential virulence genes in three Burkholderia species of different survival strategies.</title>
        <authorList>
            <person name="Kim H.S."/>
            <person name="Schell M.A."/>
            <person name="Yu Y."/>
            <person name="Ulrich R.L."/>
            <person name="Sarria S.H."/>
            <person name="Nierman W.C."/>
            <person name="DeShazer D."/>
        </authorList>
    </citation>
    <scope>NUCLEOTIDE SEQUENCE [LARGE SCALE GENOMIC DNA]</scope>
    <source>
        <strain>ATCC 700388 / DSM 13276 / CCUG 48851 / CIP 106301 / E264</strain>
    </source>
</reference>
<evidence type="ECO:0000255" key="1">
    <source>
        <dbReference type="HAMAP-Rule" id="MF_00362"/>
    </source>
</evidence>
<evidence type="ECO:0000305" key="2"/>
<comment type="function">
    <text evidence="1">Forms part of the ribosomal stalk, playing a central role in the interaction of the ribosome with GTP-bound translation factors.</text>
</comment>
<comment type="subunit">
    <text evidence="1">Part of the ribosomal stalk of the 50S ribosomal subunit. The N-terminus interacts with L11 and the large rRNA to form the base of the stalk. The C-terminus forms an elongated spine to which L12 dimers bind in a sequential fashion forming a multimeric L10(L12)X complex.</text>
</comment>
<comment type="similarity">
    <text evidence="1">Belongs to the universal ribosomal protein uL10 family.</text>
</comment>
<organism>
    <name type="scientific">Burkholderia thailandensis (strain ATCC 700388 / DSM 13276 / CCUG 48851 / CIP 106301 / E264)</name>
    <dbReference type="NCBI Taxonomy" id="271848"/>
    <lineage>
        <taxon>Bacteria</taxon>
        <taxon>Pseudomonadati</taxon>
        <taxon>Pseudomonadota</taxon>
        <taxon>Betaproteobacteria</taxon>
        <taxon>Burkholderiales</taxon>
        <taxon>Burkholderiaceae</taxon>
        <taxon>Burkholderia</taxon>
        <taxon>pseudomallei group</taxon>
    </lineage>
</organism>
<accession>Q2SU17</accession>
<feature type="chain" id="PRO_0000234838" description="Large ribosomal subunit protein uL10">
    <location>
        <begin position="1"/>
        <end position="165"/>
    </location>
</feature>
<dbReference type="EMBL" id="CP000086">
    <property type="protein sequence ID" value="ABC38210.1"/>
    <property type="molecule type" value="Genomic_DNA"/>
</dbReference>
<dbReference type="RefSeq" id="WP_011402569.1">
    <property type="nucleotide sequence ID" value="NZ_CP008786.1"/>
</dbReference>
<dbReference type="SMR" id="Q2SU17"/>
<dbReference type="GeneID" id="45122766"/>
<dbReference type="KEGG" id="bte:BTH_I3078"/>
<dbReference type="HOGENOM" id="CLU_092227_0_1_4"/>
<dbReference type="Proteomes" id="UP000001930">
    <property type="component" value="Chromosome I"/>
</dbReference>
<dbReference type="GO" id="GO:1990904">
    <property type="term" value="C:ribonucleoprotein complex"/>
    <property type="evidence" value="ECO:0007669"/>
    <property type="project" value="UniProtKB-KW"/>
</dbReference>
<dbReference type="GO" id="GO:0005840">
    <property type="term" value="C:ribosome"/>
    <property type="evidence" value="ECO:0007669"/>
    <property type="project" value="UniProtKB-KW"/>
</dbReference>
<dbReference type="GO" id="GO:0070180">
    <property type="term" value="F:large ribosomal subunit rRNA binding"/>
    <property type="evidence" value="ECO:0007669"/>
    <property type="project" value="UniProtKB-UniRule"/>
</dbReference>
<dbReference type="GO" id="GO:0006412">
    <property type="term" value="P:translation"/>
    <property type="evidence" value="ECO:0007669"/>
    <property type="project" value="UniProtKB-UniRule"/>
</dbReference>
<dbReference type="CDD" id="cd05797">
    <property type="entry name" value="Ribosomal_L10"/>
    <property type="match status" value="1"/>
</dbReference>
<dbReference type="Gene3D" id="3.30.70.1730">
    <property type="match status" value="1"/>
</dbReference>
<dbReference type="Gene3D" id="6.10.250.290">
    <property type="match status" value="1"/>
</dbReference>
<dbReference type="HAMAP" id="MF_00362">
    <property type="entry name" value="Ribosomal_uL10"/>
    <property type="match status" value="1"/>
</dbReference>
<dbReference type="InterPro" id="IPR001790">
    <property type="entry name" value="Ribosomal_uL10"/>
</dbReference>
<dbReference type="InterPro" id="IPR043141">
    <property type="entry name" value="Ribosomal_uL10-like_sf"/>
</dbReference>
<dbReference type="InterPro" id="IPR022973">
    <property type="entry name" value="Ribosomal_uL10_bac"/>
</dbReference>
<dbReference type="InterPro" id="IPR047865">
    <property type="entry name" value="Ribosomal_uL10_bac_type"/>
</dbReference>
<dbReference type="NCBIfam" id="NF000955">
    <property type="entry name" value="PRK00099.1-1"/>
    <property type="match status" value="1"/>
</dbReference>
<dbReference type="PANTHER" id="PTHR11560">
    <property type="entry name" value="39S RIBOSOMAL PROTEIN L10, MITOCHONDRIAL"/>
    <property type="match status" value="1"/>
</dbReference>
<dbReference type="Pfam" id="PF00466">
    <property type="entry name" value="Ribosomal_L10"/>
    <property type="match status" value="1"/>
</dbReference>
<dbReference type="SUPFAM" id="SSF160369">
    <property type="entry name" value="Ribosomal protein L10-like"/>
    <property type="match status" value="1"/>
</dbReference>
<name>RL10_BURTA</name>
<proteinExistence type="inferred from homology"/>
<gene>
    <name evidence="1" type="primary">rplJ</name>
    <name type="ordered locus">BTH_I3078</name>
</gene>
<keyword id="KW-0687">Ribonucleoprotein</keyword>
<keyword id="KW-0689">Ribosomal protein</keyword>
<keyword id="KW-0694">RNA-binding</keyword>
<keyword id="KW-0699">rRNA-binding</keyword>
<protein>
    <recommendedName>
        <fullName evidence="1">Large ribosomal subunit protein uL10</fullName>
    </recommendedName>
    <alternativeName>
        <fullName evidence="2">50S ribosomal protein L10</fullName>
    </alternativeName>
</protein>